<evidence type="ECO:0000255" key="1">
    <source>
        <dbReference type="HAMAP-Rule" id="MF_00405"/>
    </source>
</evidence>
<organism>
    <name type="scientific">Salmonella arizonae (strain ATCC BAA-731 / CDC346-86 / RSK2980)</name>
    <dbReference type="NCBI Taxonomy" id="41514"/>
    <lineage>
        <taxon>Bacteria</taxon>
        <taxon>Pseudomonadati</taxon>
        <taxon>Pseudomonadota</taxon>
        <taxon>Gammaproteobacteria</taxon>
        <taxon>Enterobacterales</taxon>
        <taxon>Enterobacteriaceae</taxon>
        <taxon>Salmonella</taxon>
    </lineage>
</organism>
<gene>
    <name evidence="1" type="primary">fabA</name>
    <name type="ordered locus">SARI_01943</name>
</gene>
<reference key="1">
    <citation type="submission" date="2007-11" db="EMBL/GenBank/DDBJ databases">
        <authorList>
            <consortium name="The Salmonella enterica serovar Arizonae Genome Sequencing Project"/>
            <person name="McClelland M."/>
            <person name="Sanderson E.K."/>
            <person name="Porwollik S."/>
            <person name="Spieth J."/>
            <person name="Clifton W.S."/>
            <person name="Fulton R."/>
            <person name="Chunyan W."/>
            <person name="Wollam A."/>
            <person name="Shah N."/>
            <person name="Pepin K."/>
            <person name="Bhonagiri V."/>
            <person name="Nash W."/>
            <person name="Johnson M."/>
            <person name="Thiruvilangam P."/>
            <person name="Wilson R."/>
        </authorList>
    </citation>
    <scope>NUCLEOTIDE SEQUENCE [LARGE SCALE GENOMIC DNA]</scope>
    <source>
        <strain>ATCC BAA-731 / CDC346-86 / RSK2980</strain>
    </source>
</reference>
<sequence>MVDKRESYTKEDLLASGRGELFGAKGPQLPAPNMLMMDRVVKMTETGGNFDKGYVEAELDINPDLWFFGCHFIGDPVMPGCLGLDAMWQLVGFYLGWLGGEGKGRALGVGEVKFTGQVLPTAKKVTYRIHFKRIVNRRLIMGLADGEVLVDGRLIYTAHDLKVGLFQDTSAF</sequence>
<feature type="chain" id="PRO_1000080430" description="3-hydroxydecanoyl-[acyl-carrier-protein] dehydratase">
    <location>
        <begin position="1"/>
        <end position="172"/>
    </location>
</feature>
<feature type="active site" evidence="1">
    <location>
        <position position="71"/>
    </location>
</feature>
<keyword id="KW-0963">Cytoplasm</keyword>
<keyword id="KW-0275">Fatty acid biosynthesis</keyword>
<keyword id="KW-0276">Fatty acid metabolism</keyword>
<keyword id="KW-0413">Isomerase</keyword>
<keyword id="KW-0444">Lipid biosynthesis</keyword>
<keyword id="KW-0443">Lipid metabolism</keyword>
<keyword id="KW-0456">Lyase</keyword>
<keyword id="KW-1185">Reference proteome</keyword>
<name>FABA_SALAR</name>
<proteinExistence type="inferred from homology"/>
<comment type="function">
    <text evidence="1">Necessary for the introduction of cis unsaturation into fatty acids. Catalyzes the dehydration of (3R)-3-hydroxydecanoyl-ACP to E-(2)-decenoyl-ACP and then its isomerization to Z-(3)-decenoyl-ACP. Can catalyze the dehydratase reaction for beta-hydroxyacyl-ACPs with saturated chain lengths up to 16:0, being most active on intermediate chain length.</text>
</comment>
<comment type="catalytic activity">
    <reaction evidence="1">
        <text>a (3R)-hydroxyacyl-[ACP] = a (2E)-enoyl-[ACP] + H2O</text>
        <dbReference type="Rhea" id="RHEA:13097"/>
        <dbReference type="Rhea" id="RHEA-COMP:9925"/>
        <dbReference type="Rhea" id="RHEA-COMP:9945"/>
        <dbReference type="ChEBI" id="CHEBI:15377"/>
        <dbReference type="ChEBI" id="CHEBI:78784"/>
        <dbReference type="ChEBI" id="CHEBI:78827"/>
        <dbReference type="EC" id="4.2.1.59"/>
    </reaction>
</comment>
<comment type="catalytic activity">
    <reaction evidence="1">
        <text>(3R)-hydroxydecanoyl-[ACP] = (2E)-decenoyl-[ACP] + H2O</text>
        <dbReference type="Rhea" id="RHEA:41860"/>
        <dbReference type="Rhea" id="RHEA-COMP:9638"/>
        <dbReference type="Rhea" id="RHEA-COMP:9639"/>
        <dbReference type="ChEBI" id="CHEBI:15377"/>
        <dbReference type="ChEBI" id="CHEBI:78466"/>
        <dbReference type="ChEBI" id="CHEBI:78467"/>
    </reaction>
</comment>
<comment type="catalytic activity">
    <reaction evidence="1">
        <text>(2E)-decenoyl-[ACP] = (3Z)-decenoyl-[ACP]</text>
        <dbReference type="Rhea" id="RHEA:23568"/>
        <dbReference type="Rhea" id="RHEA-COMP:9639"/>
        <dbReference type="Rhea" id="RHEA-COMP:9927"/>
        <dbReference type="ChEBI" id="CHEBI:78467"/>
        <dbReference type="ChEBI" id="CHEBI:78798"/>
        <dbReference type="EC" id="5.3.3.14"/>
    </reaction>
</comment>
<comment type="pathway">
    <text evidence="1">Lipid metabolism; fatty acid biosynthesis.</text>
</comment>
<comment type="subunit">
    <text evidence="1">Homodimer.</text>
</comment>
<comment type="subcellular location">
    <subcellularLocation>
        <location evidence="1">Cytoplasm</location>
    </subcellularLocation>
</comment>
<comment type="similarity">
    <text evidence="1">Belongs to the thioester dehydratase family. FabA subfamily.</text>
</comment>
<protein>
    <recommendedName>
        <fullName evidence="1">3-hydroxydecanoyl-[acyl-carrier-protein] dehydratase</fullName>
        <ecNumber evidence="1">4.2.1.59</ecNumber>
    </recommendedName>
    <alternativeName>
        <fullName evidence="1">3-hydroxyacyl-[acyl-carrier-protein] dehydratase FabA</fullName>
    </alternativeName>
    <alternativeName>
        <fullName evidence="1">Beta-hydroxydecanoyl thioester dehydrase</fullName>
    </alternativeName>
    <alternativeName>
        <fullName evidence="1">Trans-2-decenoyl-[acyl-carrier-protein] isomerase</fullName>
        <ecNumber evidence="1">5.3.3.14</ecNumber>
    </alternativeName>
</protein>
<dbReference type="EC" id="4.2.1.59" evidence="1"/>
<dbReference type="EC" id="5.3.3.14" evidence="1"/>
<dbReference type="EMBL" id="CP000880">
    <property type="protein sequence ID" value="ABX21825.1"/>
    <property type="molecule type" value="Genomic_DNA"/>
</dbReference>
<dbReference type="SMR" id="A9MHT5"/>
<dbReference type="STRING" id="41514.SARI_01943"/>
<dbReference type="KEGG" id="ses:SARI_01943"/>
<dbReference type="HOGENOM" id="CLU_097925_0_0_6"/>
<dbReference type="UniPathway" id="UPA00094"/>
<dbReference type="Proteomes" id="UP000002084">
    <property type="component" value="Chromosome"/>
</dbReference>
<dbReference type="GO" id="GO:0005737">
    <property type="term" value="C:cytoplasm"/>
    <property type="evidence" value="ECO:0007669"/>
    <property type="project" value="UniProtKB-SubCell"/>
</dbReference>
<dbReference type="GO" id="GO:0019171">
    <property type="term" value="F:(3R)-hydroxyacyl-[acyl-carrier-protein] dehydratase activity"/>
    <property type="evidence" value="ECO:0007669"/>
    <property type="project" value="UniProtKB-UniRule"/>
</dbReference>
<dbReference type="GO" id="GO:0034017">
    <property type="term" value="F:trans-2-decenoyl-acyl-carrier-protein isomerase activity"/>
    <property type="evidence" value="ECO:0007669"/>
    <property type="project" value="UniProtKB-UniRule"/>
</dbReference>
<dbReference type="GO" id="GO:0006636">
    <property type="term" value="P:unsaturated fatty acid biosynthetic process"/>
    <property type="evidence" value="ECO:0007669"/>
    <property type="project" value="UniProtKB-UniRule"/>
</dbReference>
<dbReference type="CDD" id="cd01287">
    <property type="entry name" value="FabA"/>
    <property type="match status" value="1"/>
</dbReference>
<dbReference type="FunFam" id="3.10.129.10:FF:000003">
    <property type="entry name" value="3-hydroxydecanoyl-[acyl-carrier-protein] dehydratase"/>
    <property type="match status" value="1"/>
</dbReference>
<dbReference type="Gene3D" id="3.10.129.10">
    <property type="entry name" value="Hotdog Thioesterase"/>
    <property type="match status" value="1"/>
</dbReference>
<dbReference type="HAMAP" id="MF_00405">
    <property type="entry name" value="FabA"/>
    <property type="match status" value="1"/>
</dbReference>
<dbReference type="InterPro" id="IPR010083">
    <property type="entry name" value="FabA"/>
</dbReference>
<dbReference type="InterPro" id="IPR013114">
    <property type="entry name" value="FabA_FabZ"/>
</dbReference>
<dbReference type="InterPro" id="IPR029069">
    <property type="entry name" value="HotDog_dom_sf"/>
</dbReference>
<dbReference type="NCBIfam" id="TIGR01749">
    <property type="entry name" value="fabA"/>
    <property type="match status" value="1"/>
</dbReference>
<dbReference type="NCBIfam" id="NF003509">
    <property type="entry name" value="PRK05174.1"/>
    <property type="match status" value="1"/>
</dbReference>
<dbReference type="PANTHER" id="PTHR30272">
    <property type="entry name" value="3-HYDROXYACYL-[ACYL-CARRIER-PROTEIN] DEHYDRATASE"/>
    <property type="match status" value="1"/>
</dbReference>
<dbReference type="PANTHER" id="PTHR30272:SF8">
    <property type="entry name" value="3-HYDROXYDECANOYL-[ACYL-CARRIER-PROTEIN] DEHYDRATASE"/>
    <property type="match status" value="1"/>
</dbReference>
<dbReference type="Pfam" id="PF07977">
    <property type="entry name" value="FabA"/>
    <property type="match status" value="1"/>
</dbReference>
<dbReference type="SUPFAM" id="SSF54637">
    <property type="entry name" value="Thioesterase/thiol ester dehydrase-isomerase"/>
    <property type="match status" value="1"/>
</dbReference>
<accession>A9MHT5</accession>